<comment type="function">
    <text evidence="1">Regulates arginine biosynthesis genes.</text>
</comment>
<comment type="pathway">
    <text>Amino-acid biosynthesis; L-arginine biosynthesis [regulation].</text>
</comment>
<comment type="subcellular location">
    <subcellularLocation>
        <location evidence="1">Cytoplasm</location>
    </subcellularLocation>
</comment>
<comment type="similarity">
    <text evidence="1">Belongs to the ArgR family.</text>
</comment>
<protein>
    <recommendedName>
        <fullName evidence="1">Arginine repressor</fullName>
    </recommendedName>
</protein>
<accession>A7ZSD1</accession>
<sequence length="156" mass="16995">MRSSAKQEELVKAFKALLKEEKFSSQGEIVAALQEQGFDNINQSKVSRMLTKFGAVRTRNAKMEMVYCLPAELGVPTTSSPLKNLVLDIDYNDAVVVIHTSPGAAQLIARLLDSLGKAEGILGTIAGDDTIFTTPANGFTVKDLYEAILELFDQEL</sequence>
<dbReference type="EMBL" id="CP000800">
    <property type="protein sequence ID" value="ABV20308.1"/>
    <property type="molecule type" value="Genomic_DNA"/>
</dbReference>
<dbReference type="RefSeq" id="WP_001257846.1">
    <property type="nucleotide sequence ID" value="NC_009801.1"/>
</dbReference>
<dbReference type="SMR" id="A7ZSD1"/>
<dbReference type="GeneID" id="93778748"/>
<dbReference type="KEGG" id="ecw:EcE24377A_3720"/>
<dbReference type="HOGENOM" id="CLU_097103_2_0_6"/>
<dbReference type="UniPathway" id="UPA00068"/>
<dbReference type="Proteomes" id="UP000001122">
    <property type="component" value="Chromosome"/>
</dbReference>
<dbReference type="GO" id="GO:0005737">
    <property type="term" value="C:cytoplasm"/>
    <property type="evidence" value="ECO:0007669"/>
    <property type="project" value="UniProtKB-SubCell"/>
</dbReference>
<dbReference type="GO" id="GO:0034618">
    <property type="term" value="F:arginine binding"/>
    <property type="evidence" value="ECO:0007669"/>
    <property type="project" value="InterPro"/>
</dbReference>
<dbReference type="GO" id="GO:0003677">
    <property type="term" value="F:DNA binding"/>
    <property type="evidence" value="ECO:0007669"/>
    <property type="project" value="UniProtKB-KW"/>
</dbReference>
<dbReference type="GO" id="GO:0003700">
    <property type="term" value="F:DNA-binding transcription factor activity"/>
    <property type="evidence" value="ECO:0007669"/>
    <property type="project" value="UniProtKB-UniRule"/>
</dbReference>
<dbReference type="GO" id="GO:0006526">
    <property type="term" value="P:L-arginine biosynthetic process"/>
    <property type="evidence" value="ECO:0007669"/>
    <property type="project" value="UniProtKB-UniPathway"/>
</dbReference>
<dbReference type="GO" id="GO:0051259">
    <property type="term" value="P:protein complex oligomerization"/>
    <property type="evidence" value="ECO:0007669"/>
    <property type="project" value="InterPro"/>
</dbReference>
<dbReference type="GO" id="GO:1900079">
    <property type="term" value="P:regulation of arginine biosynthetic process"/>
    <property type="evidence" value="ECO:0007669"/>
    <property type="project" value="UniProtKB-UniRule"/>
</dbReference>
<dbReference type="FunFam" id="1.10.10.10:FF:000074">
    <property type="entry name" value="Arginine repressor"/>
    <property type="match status" value="1"/>
</dbReference>
<dbReference type="FunFam" id="3.30.1360.40:FF:000004">
    <property type="entry name" value="Arginine repressor"/>
    <property type="match status" value="1"/>
</dbReference>
<dbReference type="Gene3D" id="3.30.1360.40">
    <property type="match status" value="1"/>
</dbReference>
<dbReference type="Gene3D" id="1.10.10.10">
    <property type="entry name" value="Winged helix-like DNA-binding domain superfamily/Winged helix DNA-binding domain"/>
    <property type="match status" value="1"/>
</dbReference>
<dbReference type="HAMAP" id="MF_00173">
    <property type="entry name" value="Arg_repressor"/>
    <property type="match status" value="1"/>
</dbReference>
<dbReference type="InterPro" id="IPR001669">
    <property type="entry name" value="Arg_repress"/>
</dbReference>
<dbReference type="InterPro" id="IPR020899">
    <property type="entry name" value="Arg_repress_C"/>
</dbReference>
<dbReference type="InterPro" id="IPR036251">
    <property type="entry name" value="Arg_repress_C_sf"/>
</dbReference>
<dbReference type="InterPro" id="IPR020900">
    <property type="entry name" value="Arg_repress_DNA-bd"/>
</dbReference>
<dbReference type="InterPro" id="IPR036388">
    <property type="entry name" value="WH-like_DNA-bd_sf"/>
</dbReference>
<dbReference type="InterPro" id="IPR036390">
    <property type="entry name" value="WH_DNA-bd_sf"/>
</dbReference>
<dbReference type="NCBIfam" id="TIGR01529">
    <property type="entry name" value="argR_whole"/>
    <property type="match status" value="1"/>
</dbReference>
<dbReference type="NCBIfam" id="NF003457">
    <property type="entry name" value="PRK05066.1"/>
    <property type="match status" value="1"/>
</dbReference>
<dbReference type="PANTHER" id="PTHR34471">
    <property type="entry name" value="ARGININE REPRESSOR"/>
    <property type="match status" value="1"/>
</dbReference>
<dbReference type="PANTHER" id="PTHR34471:SF1">
    <property type="entry name" value="ARGININE REPRESSOR"/>
    <property type="match status" value="1"/>
</dbReference>
<dbReference type="Pfam" id="PF01316">
    <property type="entry name" value="Arg_repressor"/>
    <property type="match status" value="1"/>
</dbReference>
<dbReference type="Pfam" id="PF02863">
    <property type="entry name" value="Arg_repressor_C"/>
    <property type="match status" value="1"/>
</dbReference>
<dbReference type="PRINTS" id="PR01467">
    <property type="entry name" value="ARGREPRESSOR"/>
</dbReference>
<dbReference type="SUPFAM" id="SSF55252">
    <property type="entry name" value="C-terminal domain of arginine repressor"/>
    <property type="match status" value="1"/>
</dbReference>
<dbReference type="SUPFAM" id="SSF46785">
    <property type="entry name" value="Winged helix' DNA-binding domain"/>
    <property type="match status" value="1"/>
</dbReference>
<reference key="1">
    <citation type="journal article" date="2008" name="J. Bacteriol.">
        <title>The pangenome structure of Escherichia coli: comparative genomic analysis of E. coli commensal and pathogenic isolates.</title>
        <authorList>
            <person name="Rasko D.A."/>
            <person name="Rosovitz M.J."/>
            <person name="Myers G.S.A."/>
            <person name="Mongodin E.F."/>
            <person name="Fricke W.F."/>
            <person name="Gajer P."/>
            <person name="Crabtree J."/>
            <person name="Sebaihia M."/>
            <person name="Thomson N.R."/>
            <person name="Chaudhuri R."/>
            <person name="Henderson I.R."/>
            <person name="Sperandio V."/>
            <person name="Ravel J."/>
        </authorList>
    </citation>
    <scope>NUCLEOTIDE SEQUENCE [LARGE SCALE GENOMIC DNA]</scope>
    <source>
        <strain>E24377A / ETEC</strain>
    </source>
</reference>
<keyword id="KW-0028">Amino-acid biosynthesis</keyword>
<keyword id="KW-0055">Arginine biosynthesis</keyword>
<keyword id="KW-0963">Cytoplasm</keyword>
<keyword id="KW-0238">DNA-binding</keyword>
<keyword id="KW-1185">Reference proteome</keyword>
<keyword id="KW-0678">Repressor</keyword>
<keyword id="KW-0804">Transcription</keyword>
<keyword id="KW-0805">Transcription regulation</keyword>
<organism>
    <name type="scientific">Escherichia coli O139:H28 (strain E24377A / ETEC)</name>
    <dbReference type="NCBI Taxonomy" id="331111"/>
    <lineage>
        <taxon>Bacteria</taxon>
        <taxon>Pseudomonadati</taxon>
        <taxon>Pseudomonadota</taxon>
        <taxon>Gammaproteobacteria</taxon>
        <taxon>Enterobacterales</taxon>
        <taxon>Enterobacteriaceae</taxon>
        <taxon>Escherichia</taxon>
    </lineage>
</organism>
<gene>
    <name evidence="1" type="primary">argR</name>
    <name type="ordered locus">EcE24377A_3720</name>
</gene>
<evidence type="ECO:0000255" key="1">
    <source>
        <dbReference type="HAMAP-Rule" id="MF_00173"/>
    </source>
</evidence>
<feature type="chain" id="PRO_1000058321" description="Arginine repressor">
    <location>
        <begin position="1"/>
        <end position="156"/>
    </location>
</feature>
<proteinExistence type="inferred from homology"/>
<name>ARGR_ECO24</name>